<sequence length="251" mass="28197">MLLKAAPAFALLNTQGENLSPLFSSSKSFSPKNGNRFVVSASKATNHKPLTGVVFEPFEELKKELMLVPAVPDTSLCRQKYSDDCEAAINEQINVEYNNSYVYHAMFAYFDRDNVALKGLAKFFKESSLEEREHAEKLMEFQNKRGGRVKLLSICAPPTEFDHCEKGDALYAMELALCLEKLTNQRLLNLHAVASRSNDVHLADFLESEFLVEQVDAIKKISEYVAQLRRVGQGHGVWQFDQMLLNEGAAA</sequence>
<organism>
    <name type="scientific">Nicotiana tabacum</name>
    <name type="common">Common tobacco</name>
    <dbReference type="NCBI Taxonomy" id="4097"/>
    <lineage>
        <taxon>Eukaryota</taxon>
        <taxon>Viridiplantae</taxon>
        <taxon>Streptophyta</taxon>
        <taxon>Embryophyta</taxon>
        <taxon>Tracheophyta</taxon>
        <taxon>Spermatophyta</taxon>
        <taxon>Magnoliopsida</taxon>
        <taxon>eudicotyledons</taxon>
        <taxon>Gunneridae</taxon>
        <taxon>Pentapetalae</taxon>
        <taxon>asterids</taxon>
        <taxon>lamiids</taxon>
        <taxon>Solanales</taxon>
        <taxon>Solanaceae</taxon>
        <taxon>Nicotianoideae</taxon>
        <taxon>Nicotianeae</taxon>
        <taxon>Nicotiana</taxon>
    </lineage>
</organism>
<comment type="function">
    <text evidence="1">Stores iron in a soluble, non-toxic, readily available form. Important for iron homeostasis. Has ferroxidase activity. Iron is taken up in the ferrous form and deposited as ferric hydroxides after oxidation (By similarity).</text>
</comment>
<comment type="catalytic activity">
    <reaction>
        <text>4 Fe(2+) + O2 + 4 H(+) = 4 Fe(3+) + 2 H2O</text>
        <dbReference type="Rhea" id="RHEA:11148"/>
        <dbReference type="ChEBI" id="CHEBI:15377"/>
        <dbReference type="ChEBI" id="CHEBI:15378"/>
        <dbReference type="ChEBI" id="CHEBI:15379"/>
        <dbReference type="ChEBI" id="CHEBI:29033"/>
        <dbReference type="ChEBI" id="CHEBI:29034"/>
        <dbReference type="EC" id="1.16.3.1"/>
    </reaction>
</comment>
<comment type="subunit">
    <text evidence="1">Oligomer of 24 subunits. There are two types of subunits: L (light) chain and H (heavy) chain. The major chain can be light or heavy, depending on the species and tissue type. The functional molecule forms a roughly spherical shell with a diameter of 12 nm and contains a central cavity into which the insoluble mineral iron core is deposited (By similarity).</text>
</comment>
<comment type="subcellular location">
    <subcellularLocation>
        <location evidence="1">Plastid</location>
        <location evidence="1">Chloroplast</location>
    </subcellularLocation>
</comment>
<comment type="similarity">
    <text evidence="4">Belongs to the ferritin family.</text>
</comment>
<proteinExistence type="evidence at transcript level"/>
<accession>Q8RX97</accession>
<protein>
    <recommendedName>
        <fullName>Ferritin-1, chloroplastic</fullName>
        <ecNumber>1.16.3.1</ecNumber>
    </recommendedName>
    <alternativeName>
        <fullName>NtFer1</fullName>
    </alternativeName>
</protein>
<dbReference type="EC" id="1.16.3.1"/>
<dbReference type="EMBL" id="AY083924">
    <property type="protein sequence ID" value="AAM11429.1"/>
    <property type="molecule type" value="mRNA"/>
</dbReference>
<dbReference type="RefSeq" id="NP_001312408.1">
    <property type="nucleotide sequence ID" value="NM_001325479.1"/>
</dbReference>
<dbReference type="SMR" id="Q8RX97"/>
<dbReference type="STRING" id="4097.Q8RX97"/>
<dbReference type="PaxDb" id="4097-Q8RX97"/>
<dbReference type="ProMEX" id="Q8RX97"/>
<dbReference type="GeneID" id="107789800"/>
<dbReference type="KEGG" id="nta:107789800"/>
<dbReference type="OrthoDB" id="186462at2759"/>
<dbReference type="Proteomes" id="UP000084051">
    <property type="component" value="Unplaced"/>
</dbReference>
<dbReference type="GO" id="GO:0009507">
    <property type="term" value="C:chloroplast"/>
    <property type="evidence" value="ECO:0007669"/>
    <property type="project" value="UniProtKB-SubCell"/>
</dbReference>
<dbReference type="GO" id="GO:0005737">
    <property type="term" value="C:cytoplasm"/>
    <property type="evidence" value="ECO:0000318"/>
    <property type="project" value="GO_Central"/>
</dbReference>
<dbReference type="GO" id="GO:0008199">
    <property type="term" value="F:ferric iron binding"/>
    <property type="evidence" value="ECO:0000318"/>
    <property type="project" value="GO_Central"/>
</dbReference>
<dbReference type="GO" id="GO:0008198">
    <property type="term" value="F:ferrous iron binding"/>
    <property type="evidence" value="ECO:0000318"/>
    <property type="project" value="GO_Central"/>
</dbReference>
<dbReference type="GO" id="GO:0004322">
    <property type="term" value="F:ferroxidase activity"/>
    <property type="evidence" value="ECO:0007669"/>
    <property type="project" value="UniProtKB-EC"/>
</dbReference>
<dbReference type="GO" id="GO:0006879">
    <property type="term" value="P:intracellular iron ion homeostasis"/>
    <property type="evidence" value="ECO:0007669"/>
    <property type="project" value="UniProtKB-KW"/>
</dbReference>
<dbReference type="GO" id="GO:0006826">
    <property type="term" value="P:iron ion transport"/>
    <property type="evidence" value="ECO:0007669"/>
    <property type="project" value="InterPro"/>
</dbReference>
<dbReference type="CDD" id="cd01056">
    <property type="entry name" value="Euk_Ferritin"/>
    <property type="match status" value="1"/>
</dbReference>
<dbReference type="FunFam" id="1.20.1260.10:FF:000006">
    <property type="entry name" value="Ferritin"/>
    <property type="match status" value="1"/>
</dbReference>
<dbReference type="Gene3D" id="1.20.1260.10">
    <property type="match status" value="1"/>
</dbReference>
<dbReference type="InterPro" id="IPR001519">
    <property type="entry name" value="Ferritin"/>
</dbReference>
<dbReference type="InterPro" id="IPR012347">
    <property type="entry name" value="Ferritin-like"/>
</dbReference>
<dbReference type="InterPro" id="IPR009040">
    <property type="entry name" value="Ferritin-like_diiron"/>
</dbReference>
<dbReference type="InterPro" id="IPR009078">
    <property type="entry name" value="Ferritin-like_SF"/>
</dbReference>
<dbReference type="InterPro" id="IPR014034">
    <property type="entry name" value="Ferritin_CS"/>
</dbReference>
<dbReference type="InterPro" id="IPR008331">
    <property type="entry name" value="Ferritin_DPS_dom"/>
</dbReference>
<dbReference type="PANTHER" id="PTHR11431">
    <property type="entry name" value="FERRITIN"/>
    <property type="match status" value="1"/>
</dbReference>
<dbReference type="PANTHER" id="PTHR11431:SF75">
    <property type="entry name" value="FERRITIN"/>
    <property type="match status" value="1"/>
</dbReference>
<dbReference type="Pfam" id="PF00210">
    <property type="entry name" value="Ferritin"/>
    <property type="match status" value="1"/>
</dbReference>
<dbReference type="SUPFAM" id="SSF47240">
    <property type="entry name" value="Ferritin-like"/>
    <property type="match status" value="1"/>
</dbReference>
<dbReference type="PROSITE" id="PS00540">
    <property type="entry name" value="FERRITIN_1"/>
    <property type="match status" value="1"/>
</dbReference>
<dbReference type="PROSITE" id="PS00204">
    <property type="entry name" value="FERRITIN_2"/>
    <property type="match status" value="1"/>
</dbReference>
<dbReference type="PROSITE" id="PS50905">
    <property type="entry name" value="FERRITIN_LIKE"/>
    <property type="match status" value="1"/>
</dbReference>
<keyword id="KW-0150">Chloroplast</keyword>
<keyword id="KW-0408">Iron</keyword>
<keyword id="KW-0409">Iron storage</keyword>
<keyword id="KW-0479">Metal-binding</keyword>
<keyword id="KW-0560">Oxidoreductase</keyword>
<keyword id="KW-0934">Plastid</keyword>
<keyword id="KW-1185">Reference proteome</keyword>
<keyword id="KW-0809">Transit peptide</keyword>
<reference key="1">
    <citation type="submission" date="2002-03" db="EMBL/GenBank/DDBJ databases">
        <title>cDNA cloning and gene expression of ferritin in tobacco.</title>
        <authorList>
            <person name="Jiang T."/>
            <person name="Yoshihara T."/>
            <person name="Goto F."/>
            <person name="Masuda T."/>
        </authorList>
    </citation>
    <scope>NUCLEOTIDE SEQUENCE [MRNA]</scope>
</reference>
<feature type="transit peptide" description="Chloroplast" evidence="2">
    <location>
        <begin position="1"/>
        <end position="45"/>
    </location>
</feature>
<feature type="chain" id="PRO_0000008868" description="Ferritin-1, chloroplastic">
    <location>
        <begin position="46"/>
        <end position="251"/>
    </location>
</feature>
<feature type="domain" description="Ferritin-like diiron" evidence="3">
    <location>
        <begin position="79"/>
        <end position="232"/>
    </location>
</feature>
<feature type="region of interest" description="Extension peptide (EP)">
    <location>
        <begin position="46"/>
        <end position="78"/>
    </location>
</feature>
<feature type="binding site" evidence="3">
    <location>
        <position position="96"/>
    </location>
    <ligand>
        <name>Fe cation</name>
        <dbReference type="ChEBI" id="CHEBI:24875"/>
        <label>1</label>
    </ligand>
</feature>
<feature type="binding site" evidence="3">
    <location>
        <position position="131"/>
    </location>
    <ligand>
        <name>Fe cation</name>
        <dbReference type="ChEBI" id="CHEBI:24875"/>
        <label>1</label>
    </ligand>
</feature>
<feature type="binding site" evidence="3">
    <location>
        <position position="131"/>
    </location>
    <ligand>
        <name>Fe cation</name>
        <dbReference type="ChEBI" id="CHEBI:24875"/>
        <label>2</label>
    </ligand>
</feature>
<feature type="binding site" evidence="3">
    <location>
        <position position="134"/>
    </location>
    <ligand>
        <name>Fe cation</name>
        <dbReference type="ChEBI" id="CHEBI:24875"/>
        <label>1</label>
    </ligand>
</feature>
<feature type="binding site" evidence="3">
    <location>
        <position position="180"/>
    </location>
    <ligand>
        <name>Fe cation</name>
        <dbReference type="ChEBI" id="CHEBI:24875"/>
        <label>2</label>
    </ligand>
</feature>
<feature type="binding site" evidence="3">
    <location>
        <position position="214"/>
    </location>
    <ligand>
        <name>Fe cation</name>
        <dbReference type="ChEBI" id="CHEBI:24875"/>
        <label>2</label>
    </ligand>
</feature>
<name>FRI1_TOBAC</name>
<gene>
    <name type="primary">FER1</name>
</gene>
<evidence type="ECO:0000250" key="1"/>
<evidence type="ECO:0000255" key="2"/>
<evidence type="ECO:0000255" key="3">
    <source>
        <dbReference type="PROSITE-ProRule" id="PRU00085"/>
    </source>
</evidence>
<evidence type="ECO:0000305" key="4"/>